<sequence>MGEHFLLEMVDITKEFPGVKALDRVQLKVRKGSVHALMGENGAGKSTLMKILIGMYKPNEGKIIFDGEEVTFNSINDALDKGISMIHQELSPIPEMTVAENIFLGREPTFGKSGLVDNKKLIEMTRNLLESLEINIDPRKKMGELSIANTQMIEIAKAISFHSKLVIMDEPTSAITEKEVAQLFKMIESLKKKGVGIIYITHKMSELDEIADDISVFRDGKYIGTDTAKNLTRDDLIKMMVGRELNQIFDKPEPKLGEVILSVKSLTKQDYFEDVSFEVRKGEIVGFAGLMGSGRTEVLETIFGVKEAESGEIFVNGQKARIKSPQDAVKNNMGFLTEDRKLTGLFLPLSVRENMITVNIDKYINMGWLNGKRVKKDCEQQKQKLYIKTPSIEQIVENLSGGNQQKVLLARWLLKNPDILFLDEPTRGIDVGAKSEFYNLIFELASQGKAIVVVSSEMAEILGLCDRILVMHEGKVTGELTREEANQEKIMQYATGQAKMAKKLHVHNNFEQTVTANKIEIG</sequence>
<protein>
    <recommendedName>
        <fullName evidence="1">Putative ribose/galactose/methyl galactoside import ATP-binding protein</fullName>
        <ecNumber evidence="1">7.5.2.11</ecNumber>
        <ecNumber evidence="1">7.5.2.7</ecNumber>
    </recommendedName>
</protein>
<dbReference type="EC" id="7.5.2.11" evidence="1"/>
<dbReference type="EC" id="7.5.2.7" evidence="1"/>
<dbReference type="EMBL" id="BA000004">
    <property type="protein sequence ID" value="BAB06041.1"/>
    <property type="molecule type" value="Genomic_DNA"/>
</dbReference>
<dbReference type="PIR" id="B83940">
    <property type="entry name" value="B83940"/>
</dbReference>
<dbReference type="RefSeq" id="WP_010898478.1">
    <property type="nucleotide sequence ID" value="NC_002570.2"/>
</dbReference>
<dbReference type="SMR" id="Q9KAG5"/>
<dbReference type="STRING" id="272558.gene:10728220"/>
<dbReference type="DNASU" id="891696"/>
<dbReference type="KEGG" id="bha:BH2322"/>
<dbReference type="eggNOG" id="COG1129">
    <property type="taxonomic scope" value="Bacteria"/>
</dbReference>
<dbReference type="HOGENOM" id="CLU_000604_92_3_9"/>
<dbReference type="OrthoDB" id="9771863at2"/>
<dbReference type="Proteomes" id="UP000001258">
    <property type="component" value="Chromosome"/>
</dbReference>
<dbReference type="GO" id="GO:0005886">
    <property type="term" value="C:plasma membrane"/>
    <property type="evidence" value="ECO:0007669"/>
    <property type="project" value="UniProtKB-SubCell"/>
</dbReference>
<dbReference type="GO" id="GO:0015611">
    <property type="term" value="F:ABC-type D-ribose transporter activity"/>
    <property type="evidence" value="ECO:0007669"/>
    <property type="project" value="UniProtKB-EC"/>
</dbReference>
<dbReference type="GO" id="GO:0005524">
    <property type="term" value="F:ATP binding"/>
    <property type="evidence" value="ECO:0007669"/>
    <property type="project" value="UniProtKB-KW"/>
</dbReference>
<dbReference type="GO" id="GO:0016887">
    <property type="term" value="F:ATP hydrolysis activity"/>
    <property type="evidence" value="ECO:0007669"/>
    <property type="project" value="InterPro"/>
</dbReference>
<dbReference type="CDD" id="cd03216">
    <property type="entry name" value="ABC_Carb_Monos_I"/>
    <property type="match status" value="1"/>
</dbReference>
<dbReference type="CDD" id="cd03215">
    <property type="entry name" value="ABC_Carb_Monos_II"/>
    <property type="match status" value="1"/>
</dbReference>
<dbReference type="FunFam" id="3.40.50.300:FF:000126">
    <property type="entry name" value="Galactose/methyl galactoside import ATP-binding protein MglA"/>
    <property type="match status" value="1"/>
</dbReference>
<dbReference type="FunFam" id="3.40.50.300:FF:000127">
    <property type="entry name" value="Ribose import ATP-binding protein RbsA"/>
    <property type="match status" value="1"/>
</dbReference>
<dbReference type="Gene3D" id="3.40.50.300">
    <property type="entry name" value="P-loop containing nucleotide triphosphate hydrolases"/>
    <property type="match status" value="2"/>
</dbReference>
<dbReference type="InterPro" id="IPR003593">
    <property type="entry name" value="AAA+_ATPase"/>
</dbReference>
<dbReference type="InterPro" id="IPR050107">
    <property type="entry name" value="ABC_carbohydrate_import_ATPase"/>
</dbReference>
<dbReference type="InterPro" id="IPR003439">
    <property type="entry name" value="ABC_transporter-like_ATP-bd"/>
</dbReference>
<dbReference type="InterPro" id="IPR017871">
    <property type="entry name" value="ABC_transporter-like_CS"/>
</dbReference>
<dbReference type="InterPro" id="IPR027417">
    <property type="entry name" value="P-loop_NTPase"/>
</dbReference>
<dbReference type="PANTHER" id="PTHR43790">
    <property type="entry name" value="CARBOHYDRATE TRANSPORT ATP-BINDING PROTEIN MG119-RELATED"/>
    <property type="match status" value="1"/>
</dbReference>
<dbReference type="PANTHER" id="PTHR43790:SF7">
    <property type="entry name" value="GALACTOSE_METHYL GALACTOSIDE IMPORT ATP-BINDING PROTEIN MGLA"/>
    <property type="match status" value="1"/>
</dbReference>
<dbReference type="Pfam" id="PF00005">
    <property type="entry name" value="ABC_tran"/>
    <property type="match status" value="2"/>
</dbReference>
<dbReference type="SMART" id="SM00382">
    <property type="entry name" value="AAA"/>
    <property type="match status" value="2"/>
</dbReference>
<dbReference type="SUPFAM" id="SSF52540">
    <property type="entry name" value="P-loop containing nucleoside triphosphate hydrolases"/>
    <property type="match status" value="2"/>
</dbReference>
<dbReference type="PROSITE" id="PS00211">
    <property type="entry name" value="ABC_TRANSPORTER_1"/>
    <property type="match status" value="1"/>
</dbReference>
<dbReference type="PROSITE" id="PS50893">
    <property type="entry name" value="ABC_TRANSPORTER_2"/>
    <property type="match status" value="2"/>
</dbReference>
<dbReference type="PROSITE" id="PS51260">
    <property type="entry name" value="MGLA"/>
    <property type="match status" value="1"/>
</dbReference>
<dbReference type="PROSITE" id="PS51254">
    <property type="entry name" value="RBSA"/>
    <property type="match status" value="1"/>
</dbReference>
<name>RGMG_HALH5</name>
<evidence type="ECO:0000255" key="1">
    <source>
        <dbReference type="HAMAP-Rule" id="MF_01717"/>
    </source>
</evidence>
<comment type="function">
    <text evidence="1">Part of an ABC transporter complex involved in carbohydrate import. Could be involved in ribose, galactose and/or methyl galactoside import. Responsible for energy coupling to the transport system.</text>
</comment>
<comment type="catalytic activity">
    <reaction evidence="1">
        <text>D-ribose(out) + ATP + H2O = D-ribose(in) + ADP + phosphate + H(+)</text>
        <dbReference type="Rhea" id="RHEA:29903"/>
        <dbReference type="ChEBI" id="CHEBI:15377"/>
        <dbReference type="ChEBI" id="CHEBI:15378"/>
        <dbReference type="ChEBI" id="CHEBI:30616"/>
        <dbReference type="ChEBI" id="CHEBI:43474"/>
        <dbReference type="ChEBI" id="CHEBI:47013"/>
        <dbReference type="ChEBI" id="CHEBI:456216"/>
        <dbReference type="EC" id="7.5.2.7"/>
    </reaction>
</comment>
<comment type="catalytic activity">
    <reaction evidence="1">
        <text>D-galactose(out) + ATP + H2O = D-galactose(in) + ADP + phosphate + H(+)</text>
        <dbReference type="Rhea" id="RHEA:60156"/>
        <dbReference type="ChEBI" id="CHEBI:4139"/>
        <dbReference type="ChEBI" id="CHEBI:15377"/>
        <dbReference type="ChEBI" id="CHEBI:15378"/>
        <dbReference type="ChEBI" id="CHEBI:30616"/>
        <dbReference type="ChEBI" id="CHEBI:43474"/>
        <dbReference type="ChEBI" id="CHEBI:456216"/>
        <dbReference type="EC" id="7.5.2.11"/>
    </reaction>
</comment>
<comment type="subcellular location">
    <subcellularLocation>
        <location evidence="1">Cell membrane</location>
        <topology evidence="1">Peripheral membrane protein</topology>
    </subcellularLocation>
</comment>
<comment type="similarity">
    <text evidence="1">Belongs to the ABC transporter superfamily. Carbohydrate importer 2 (CUT2) (TC 3.A.1.2) family.</text>
</comment>
<proteinExistence type="inferred from homology"/>
<feature type="chain" id="PRO_0000262973" description="Putative ribose/galactose/methyl galactoside import ATP-binding protein">
    <location>
        <begin position="1"/>
        <end position="522"/>
    </location>
</feature>
<feature type="domain" description="ABC transporter 1" evidence="1">
    <location>
        <begin position="7"/>
        <end position="244"/>
    </location>
</feature>
<feature type="domain" description="ABC transporter 2" evidence="1">
    <location>
        <begin position="254"/>
        <end position="498"/>
    </location>
</feature>
<feature type="binding site" evidence="1">
    <location>
        <begin position="39"/>
        <end position="46"/>
    </location>
    <ligand>
        <name>ATP</name>
        <dbReference type="ChEBI" id="CHEBI:30616"/>
    </ligand>
</feature>
<gene>
    <name type="ordered locus">BH2322</name>
</gene>
<keyword id="KW-0067">ATP-binding</keyword>
<keyword id="KW-1003">Cell membrane</keyword>
<keyword id="KW-0472">Membrane</keyword>
<keyword id="KW-0547">Nucleotide-binding</keyword>
<keyword id="KW-1185">Reference proteome</keyword>
<keyword id="KW-0677">Repeat</keyword>
<keyword id="KW-0762">Sugar transport</keyword>
<keyword id="KW-1278">Translocase</keyword>
<keyword id="KW-0813">Transport</keyword>
<reference key="1">
    <citation type="journal article" date="2000" name="Nucleic Acids Res.">
        <title>Complete genome sequence of the alkaliphilic bacterium Bacillus halodurans and genomic sequence comparison with Bacillus subtilis.</title>
        <authorList>
            <person name="Takami H."/>
            <person name="Nakasone K."/>
            <person name="Takaki Y."/>
            <person name="Maeno G."/>
            <person name="Sasaki R."/>
            <person name="Masui N."/>
            <person name="Fuji F."/>
            <person name="Hirama C."/>
            <person name="Nakamura Y."/>
            <person name="Ogasawara N."/>
            <person name="Kuhara S."/>
            <person name="Horikoshi K."/>
        </authorList>
    </citation>
    <scope>NUCLEOTIDE SEQUENCE [LARGE SCALE GENOMIC DNA]</scope>
    <source>
        <strain>ATCC BAA-125 / DSM 18197 / FERM 7344 / JCM 9153 / C-125</strain>
    </source>
</reference>
<organism>
    <name type="scientific">Halalkalibacterium halodurans (strain ATCC BAA-125 / DSM 18197 / FERM 7344 / JCM 9153 / C-125)</name>
    <name type="common">Bacillus halodurans</name>
    <dbReference type="NCBI Taxonomy" id="272558"/>
    <lineage>
        <taxon>Bacteria</taxon>
        <taxon>Bacillati</taxon>
        <taxon>Bacillota</taxon>
        <taxon>Bacilli</taxon>
        <taxon>Bacillales</taxon>
        <taxon>Bacillaceae</taxon>
        <taxon>Halalkalibacterium (ex Joshi et al. 2022)</taxon>
    </lineage>
</organism>
<accession>Q9KAG5</accession>